<sequence>MTVPPPLVVITGPTATGKTEVGINVALACGGEIVSADSMMVYRGMDIGTAKPSASEMRGVPHHLIDVVDPDEEFNVARYQQLAGEAIVGILGRKRVPLLVGGTGLYIRSVVEDYRFPVRADRRLRNRLQEAAELYGCARLHRHLAVVDPVTARRLHPNDQRRIIRALEVYYQSGIPFSRYPDRRDRAPKYLPVMFGLNMERGRLYRRIEDRVDAMIRAGLVREVQSLLEKGYGPELVAMKGLGYKEIAAHLRGSLTLEEAIHILKRNTRRFAKRQLTWFRRDEQIRWLDVEECGGPVGAAREIVGSIEQE</sequence>
<reference key="1">
    <citation type="submission" date="2007-10" db="EMBL/GenBank/DDBJ databases">
        <title>Complete sequence of chromosome of Desulforudis audaxviator MP104C.</title>
        <authorList>
            <person name="Copeland A."/>
            <person name="Lucas S."/>
            <person name="Lapidus A."/>
            <person name="Barry K."/>
            <person name="Glavina del Rio T."/>
            <person name="Dalin E."/>
            <person name="Tice H."/>
            <person name="Bruce D."/>
            <person name="Pitluck S."/>
            <person name="Lowry S.R."/>
            <person name="Larimer F."/>
            <person name="Land M.L."/>
            <person name="Hauser L."/>
            <person name="Kyrpides N."/>
            <person name="Ivanova N.N."/>
            <person name="Richardson P."/>
        </authorList>
    </citation>
    <scope>NUCLEOTIDE SEQUENCE [LARGE SCALE GENOMIC DNA]</scope>
    <source>
        <strain>MP104C</strain>
    </source>
</reference>
<protein>
    <recommendedName>
        <fullName evidence="1">tRNA dimethylallyltransferase</fullName>
        <ecNumber evidence="1">2.5.1.75</ecNumber>
    </recommendedName>
    <alternativeName>
        <fullName evidence="1">Dimethylallyl diphosphate:tRNA dimethylallyltransferase</fullName>
        <shortName evidence="1">DMAPP:tRNA dimethylallyltransferase</shortName>
        <shortName evidence="1">DMATase</shortName>
    </alternativeName>
    <alternativeName>
        <fullName evidence="1">Isopentenyl-diphosphate:tRNA isopentenyltransferase</fullName>
        <shortName evidence="1">IPP transferase</shortName>
        <shortName evidence="1">IPPT</shortName>
        <shortName evidence="1">IPTase</shortName>
    </alternativeName>
</protein>
<organism>
    <name type="scientific">Desulforudis audaxviator (strain MP104C)</name>
    <dbReference type="NCBI Taxonomy" id="477974"/>
    <lineage>
        <taxon>Bacteria</taxon>
        <taxon>Bacillati</taxon>
        <taxon>Bacillota</taxon>
        <taxon>Clostridia</taxon>
        <taxon>Thermoanaerobacterales</taxon>
        <taxon>Candidatus Desulforudaceae</taxon>
        <taxon>Candidatus Desulforudis</taxon>
    </lineage>
</organism>
<accession>B1I295</accession>
<name>MIAA_DESAP</name>
<proteinExistence type="inferred from homology"/>
<keyword id="KW-0067">ATP-binding</keyword>
<keyword id="KW-0460">Magnesium</keyword>
<keyword id="KW-0547">Nucleotide-binding</keyword>
<keyword id="KW-1185">Reference proteome</keyword>
<keyword id="KW-0808">Transferase</keyword>
<keyword id="KW-0819">tRNA processing</keyword>
<evidence type="ECO:0000255" key="1">
    <source>
        <dbReference type="HAMAP-Rule" id="MF_00185"/>
    </source>
</evidence>
<dbReference type="EC" id="2.5.1.75" evidence="1"/>
<dbReference type="EMBL" id="CP000860">
    <property type="protein sequence ID" value="ACA59097.1"/>
    <property type="molecule type" value="Genomic_DNA"/>
</dbReference>
<dbReference type="RefSeq" id="WP_012301686.1">
    <property type="nucleotide sequence ID" value="NC_010424.1"/>
</dbReference>
<dbReference type="SMR" id="B1I295"/>
<dbReference type="STRING" id="477974.Daud_0556"/>
<dbReference type="KEGG" id="dau:Daud_0556"/>
<dbReference type="eggNOG" id="COG0324">
    <property type="taxonomic scope" value="Bacteria"/>
</dbReference>
<dbReference type="HOGENOM" id="CLU_032616_0_1_9"/>
<dbReference type="OrthoDB" id="9776390at2"/>
<dbReference type="Proteomes" id="UP000008544">
    <property type="component" value="Chromosome"/>
</dbReference>
<dbReference type="GO" id="GO:0005524">
    <property type="term" value="F:ATP binding"/>
    <property type="evidence" value="ECO:0007669"/>
    <property type="project" value="UniProtKB-UniRule"/>
</dbReference>
<dbReference type="GO" id="GO:0052381">
    <property type="term" value="F:tRNA dimethylallyltransferase activity"/>
    <property type="evidence" value="ECO:0007669"/>
    <property type="project" value="UniProtKB-UniRule"/>
</dbReference>
<dbReference type="GO" id="GO:0006400">
    <property type="term" value="P:tRNA modification"/>
    <property type="evidence" value="ECO:0007669"/>
    <property type="project" value="TreeGrafter"/>
</dbReference>
<dbReference type="Gene3D" id="1.10.20.140">
    <property type="match status" value="1"/>
</dbReference>
<dbReference type="Gene3D" id="3.40.50.300">
    <property type="entry name" value="P-loop containing nucleotide triphosphate hydrolases"/>
    <property type="match status" value="1"/>
</dbReference>
<dbReference type="HAMAP" id="MF_00185">
    <property type="entry name" value="IPP_trans"/>
    <property type="match status" value="1"/>
</dbReference>
<dbReference type="InterPro" id="IPR039657">
    <property type="entry name" value="Dimethylallyltransferase"/>
</dbReference>
<dbReference type="InterPro" id="IPR018022">
    <property type="entry name" value="IPT"/>
</dbReference>
<dbReference type="InterPro" id="IPR027417">
    <property type="entry name" value="P-loop_NTPase"/>
</dbReference>
<dbReference type="NCBIfam" id="TIGR00174">
    <property type="entry name" value="miaA"/>
    <property type="match status" value="1"/>
</dbReference>
<dbReference type="PANTHER" id="PTHR11088">
    <property type="entry name" value="TRNA DIMETHYLALLYLTRANSFERASE"/>
    <property type="match status" value="1"/>
</dbReference>
<dbReference type="PANTHER" id="PTHR11088:SF60">
    <property type="entry name" value="TRNA DIMETHYLALLYLTRANSFERASE"/>
    <property type="match status" value="1"/>
</dbReference>
<dbReference type="Pfam" id="PF01715">
    <property type="entry name" value="IPPT"/>
    <property type="match status" value="1"/>
</dbReference>
<dbReference type="SUPFAM" id="SSF52540">
    <property type="entry name" value="P-loop containing nucleoside triphosphate hydrolases"/>
    <property type="match status" value="1"/>
</dbReference>
<feature type="chain" id="PRO_0000377144" description="tRNA dimethylallyltransferase">
    <location>
        <begin position="1"/>
        <end position="310"/>
    </location>
</feature>
<feature type="region of interest" description="Interaction with substrate tRNA" evidence="1">
    <location>
        <begin position="37"/>
        <end position="40"/>
    </location>
</feature>
<feature type="binding site" evidence="1">
    <location>
        <begin position="12"/>
        <end position="19"/>
    </location>
    <ligand>
        <name>ATP</name>
        <dbReference type="ChEBI" id="CHEBI:30616"/>
    </ligand>
</feature>
<feature type="binding site" evidence="1">
    <location>
        <begin position="14"/>
        <end position="19"/>
    </location>
    <ligand>
        <name>substrate</name>
    </ligand>
</feature>
<feature type="site" description="Interaction with substrate tRNA" evidence="1">
    <location>
        <position position="103"/>
    </location>
</feature>
<feature type="site" description="Interaction with substrate tRNA" evidence="1">
    <location>
        <position position="125"/>
    </location>
</feature>
<comment type="function">
    <text evidence="1">Catalyzes the transfer of a dimethylallyl group onto the adenine at position 37 in tRNAs that read codons beginning with uridine, leading to the formation of N6-(dimethylallyl)adenosine (i(6)A).</text>
</comment>
<comment type="catalytic activity">
    <reaction evidence="1">
        <text>adenosine(37) in tRNA + dimethylallyl diphosphate = N(6)-dimethylallyladenosine(37) in tRNA + diphosphate</text>
        <dbReference type="Rhea" id="RHEA:26482"/>
        <dbReference type="Rhea" id="RHEA-COMP:10162"/>
        <dbReference type="Rhea" id="RHEA-COMP:10375"/>
        <dbReference type="ChEBI" id="CHEBI:33019"/>
        <dbReference type="ChEBI" id="CHEBI:57623"/>
        <dbReference type="ChEBI" id="CHEBI:74411"/>
        <dbReference type="ChEBI" id="CHEBI:74415"/>
        <dbReference type="EC" id="2.5.1.75"/>
    </reaction>
</comment>
<comment type="cofactor">
    <cofactor evidence="1">
        <name>Mg(2+)</name>
        <dbReference type="ChEBI" id="CHEBI:18420"/>
    </cofactor>
</comment>
<comment type="subunit">
    <text evidence="1">Monomer.</text>
</comment>
<comment type="similarity">
    <text evidence="1">Belongs to the IPP transferase family.</text>
</comment>
<gene>
    <name evidence="1" type="primary">miaA</name>
    <name type="ordered locus">Daud_0556</name>
</gene>